<comment type="function">
    <text evidence="2">Inward rectifier potassium channels are characterized by a greater tendency to allow potassium to flow into the cell rather than out of it. Their voltage dependence is regulated by the concentration of extracellular potassium; as external potassium is raised, the voltage range of the channel opening shifts to more positive voltages. The inward rectification is mainly due to the blockage of outward current by internal magnesium. KCNJ13 has a very low single channel conductance, low sensitivity to block by external barium and cesium, and no dependence of its inward rectification properties on the internal blocking particle magnesium.</text>
</comment>
<comment type="catalytic activity">
    <reaction evidence="2">
        <text>K(+)(in) = K(+)(out)</text>
        <dbReference type="Rhea" id="RHEA:29463"/>
        <dbReference type="ChEBI" id="CHEBI:29103"/>
    </reaction>
</comment>
<comment type="activity regulation">
    <text evidence="2">Inhibited by Ba(2+) and Cs(+), although sensitivity to those inhibitors is much lower than in other Kir channels.</text>
</comment>
<comment type="subunit">
    <text evidence="3">Homotetramer.</text>
</comment>
<comment type="subcellular location">
    <subcellularLocation>
        <location evidence="5">Membrane</location>
        <topology evidence="5">Multi-pass membrane protein</topology>
    </subcellularLocation>
    <subcellularLocation>
        <location evidence="4">Cell membrane</location>
    </subcellularLocation>
</comment>
<comment type="PTM">
    <text evidence="1">Phosphorylation at Ser-201 by PKC strongly inhibits ionic currents, while phosphorylation at Ser-287 by PKA increases them.</text>
</comment>
<comment type="similarity">
    <text evidence="6">Belongs to the inward rectifier-type potassium channel (TC 1.A.2.1) family. KCNJ13 subfamily.</text>
</comment>
<reference key="1">
    <citation type="submission" date="1999-11" db="EMBL/GenBank/DDBJ databases">
        <title>Cloning and sequencing of guinea pig inwardly rectifying potassium channel Kir7.1.</title>
        <authorList>
            <person name="Derst C."/>
        </authorList>
    </citation>
    <scope>NUCLEOTIDE SEQUENCE [GENOMIC DNA / MRNA]</scope>
    <source>
        <tissue>Kidney</tissue>
    </source>
</reference>
<organism>
    <name type="scientific">Cavia porcellus</name>
    <name type="common">Guinea pig</name>
    <dbReference type="NCBI Taxonomy" id="10141"/>
    <lineage>
        <taxon>Eukaryota</taxon>
        <taxon>Metazoa</taxon>
        <taxon>Chordata</taxon>
        <taxon>Craniata</taxon>
        <taxon>Vertebrata</taxon>
        <taxon>Euteleostomi</taxon>
        <taxon>Mammalia</taxon>
        <taxon>Eutheria</taxon>
        <taxon>Euarchontoglires</taxon>
        <taxon>Glires</taxon>
        <taxon>Rodentia</taxon>
        <taxon>Hystricomorpha</taxon>
        <taxon>Caviidae</taxon>
        <taxon>Cavia</taxon>
    </lineage>
</organism>
<dbReference type="EMBL" id="AF200713">
    <property type="protein sequence ID" value="AAF12822.1"/>
    <property type="molecule type" value="mRNA"/>
</dbReference>
<dbReference type="EMBL" id="AF200714">
    <property type="protein sequence ID" value="AAF12823.1"/>
    <property type="molecule type" value="Genomic_DNA"/>
</dbReference>
<dbReference type="RefSeq" id="NP_001166225.1">
    <property type="nucleotide sequence ID" value="NM_001172754.1"/>
</dbReference>
<dbReference type="SMR" id="Q9QZ65"/>
<dbReference type="FunCoup" id="Q9QZ65">
    <property type="interactions" value="387"/>
</dbReference>
<dbReference type="STRING" id="10141.ENSCPOP00000012724"/>
<dbReference type="GeneID" id="100379277"/>
<dbReference type="KEGG" id="cpoc:100379277"/>
<dbReference type="CTD" id="3769"/>
<dbReference type="eggNOG" id="KOG3827">
    <property type="taxonomic scope" value="Eukaryota"/>
</dbReference>
<dbReference type="InParanoid" id="Q9QZ65"/>
<dbReference type="OrthoDB" id="273257at2759"/>
<dbReference type="Proteomes" id="UP000005447">
    <property type="component" value="Unassembled WGS sequence"/>
</dbReference>
<dbReference type="GO" id="GO:0034702">
    <property type="term" value="C:monoatomic ion channel complex"/>
    <property type="evidence" value="ECO:0007669"/>
    <property type="project" value="UniProtKB-KW"/>
</dbReference>
<dbReference type="GO" id="GO:0005886">
    <property type="term" value="C:plasma membrane"/>
    <property type="evidence" value="ECO:0007669"/>
    <property type="project" value="UniProtKB-SubCell"/>
</dbReference>
<dbReference type="GO" id="GO:0005242">
    <property type="term" value="F:inward rectifier potassium channel activity"/>
    <property type="evidence" value="ECO:0007669"/>
    <property type="project" value="InterPro"/>
</dbReference>
<dbReference type="GO" id="GO:1990573">
    <property type="term" value="P:potassium ion import across plasma membrane"/>
    <property type="evidence" value="ECO:0007669"/>
    <property type="project" value="TreeGrafter"/>
</dbReference>
<dbReference type="GO" id="GO:0034765">
    <property type="term" value="P:regulation of monoatomic ion transmembrane transport"/>
    <property type="evidence" value="ECO:0007669"/>
    <property type="project" value="TreeGrafter"/>
</dbReference>
<dbReference type="FunFam" id="1.10.287.70:FF:000081">
    <property type="entry name" value="inward rectifier potassium channel 13 isoform X1"/>
    <property type="match status" value="1"/>
</dbReference>
<dbReference type="FunFam" id="2.60.40.1400:FF:000004">
    <property type="entry name" value="inward rectifier potassium channel 13 isoform X1"/>
    <property type="match status" value="1"/>
</dbReference>
<dbReference type="Gene3D" id="1.10.287.70">
    <property type="match status" value="1"/>
</dbReference>
<dbReference type="Gene3D" id="2.60.40.1400">
    <property type="entry name" value="G protein-activated inward rectifier potassium channel 1"/>
    <property type="match status" value="1"/>
</dbReference>
<dbReference type="InterPro" id="IPR014756">
    <property type="entry name" value="Ig_E-set"/>
</dbReference>
<dbReference type="InterPro" id="IPR041647">
    <property type="entry name" value="IRK_C"/>
</dbReference>
<dbReference type="InterPro" id="IPR016449">
    <property type="entry name" value="K_chnl_inward-rec_Kir"/>
</dbReference>
<dbReference type="InterPro" id="IPR013518">
    <property type="entry name" value="K_chnl_inward-rec_Kir_cyto"/>
</dbReference>
<dbReference type="InterPro" id="IPR008062">
    <property type="entry name" value="KCNJ13"/>
</dbReference>
<dbReference type="InterPro" id="IPR040445">
    <property type="entry name" value="Kir_TM"/>
</dbReference>
<dbReference type="PANTHER" id="PTHR11767">
    <property type="entry name" value="INWARD RECTIFIER POTASSIUM CHANNEL"/>
    <property type="match status" value="1"/>
</dbReference>
<dbReference type="PANTHER" id="PTHR11767:SF3">
    <property type="entry name" value="INWARD RECTIFIER POTASSIUM CHANNEL 13"/>
    <property type="match status" value="1"/>
</dbReference>
<dbReference type="Pfam" id="PF01007">
    <property type="entry name" value="IRK"/>
    <property type="match status" value="1"/>
</dbReference>
<dbReference type="Pfam" id="PF17655">
    <property type="entry name" value="IRK_C"/>
    <property type="match status" value="1"/>
</dbReference>
<dbReference type="PIRSF" id="PIRSF005465">
    <property type="entry name" value="GIRK_kir"/>
    <property type="match status" value="1"/>
</dbReference>
<dbReference type="PRINTS" id="PR01679">
    <property type="entry name" value="KIR7CHANNEL"/>
</dbReference>
<dbReference type="PRINTS" id="PR01320">
    <property type="entry name" value="KIRCHANNEL"/>
</dbReference>
<dbReference type="SUPFAM" id="SSF81296">
    <property type="entry name" value="E set domains"/>
    <property type="match status" value="1"/>
</dbReference>
<dbReference type="SUPFAM" id="SSF81324">
    <property type="entry name" value="Voltage-gated potassium channels"/>
    <property type="match status" value="1"/>
</dbReference>
<gene>
    <name type="primary">KCNJ13</name>
</gene>
<sequence>MESSNCKVITPLLSQRHRRMVTKDGHSTLQTDGAPRGLVYLRDAWGTLIDMRWRWVMLVFSASFVLHWLVFAVLWYVLAEMNGDLELDHDAPPENHTICVKYITSFTAAFSFSLETQLTIGYGTMFPSGDCPSAIALLAIQMLLGLMLEAFITGAFVAKIARPKNRAFSIRFTDLAVVAHRDGKPNLIFQVANIRHSPLTSVRVSAVLYQERENGQLHQTSVDFHLDGISSEECPFFIFPLTYYHSITPSSPLVTLLQHENPPHFELVVFLSAMQEGTGEICQRRTSYLPSEIMLHHCFASLLTRGSKGEYKVKMENFDKTVPELPTPLVSKSPHRTDLDIRINGQSIDNFQISETGLTE</sequence>
<feature type="chain" id="PRO_0000154965" description="Inward rectifier potassium channel 13">
    <location>
        <begin position="1"/>
        <end position="360"/>
    </location>
</feature>
<feature type="topological domain" description="Cytoplasmic" evidence="3">
    <location>
        <begin position="1"/>
        <end position="50"/>
    </location>
</feature>
<feature type="transmembrane region" description="Helical; Name=M1" evidence="3">
    <location>
        <begin position="51"/>
        <end position="77"/>
    </location>
</feature>
<feature type="topological domain" description="Extracellular" evidence="3">
    <location>
        <begin position="78"/>
        <end position="105"/>
    </location>
</feature>
<feature type="intramembrane region" description="Helical; Pore-forming" evidence="3">
    <location>
        <begin position="106"/>
        <end position="122"/>
    </location>
</feature>
<feature type="topological domain" description="Extracellular" evidence="3">
    <location>
        <begin position="123"/>
        <end position="131"/>
    </location>
</feature>
<feature type="transmembrane region" description="Helical; Name=M2" evidence="3">
    <location>
        <begin position="132"/>
        <end position="157"/>
    </location>
</feature>
<feature type="topological domain" description="Cytoplasmic" evidence="3">
    <location>
        <begin position="158"/>
        <end position="360"/>
    </location>
</feature>
<feature type="short sequence motif" description="Selectivity filter" evidence="6">
    <location>
        <begin position="119"/>
        <end position="124"/>
    </location>
</feature>
<feature type="site" description="Role in the control of polyamine-mediated channel gating and in the blocking by intracellular magnesium" evidence="1">
    <location>
        <position position="149"/>
    </location>
</feature>
<feature type="modified residue" description="Phosphoserine; by PKC" evidence="2">
    <location>
        <position position="201"/>
    </location>
</feature>
<feature type="modified residue" description="Phosphoserine; by PKA" evidence="2">
    <location>
        <position position="287"/>
    </location>
</feature>
<keyword id="KW-1003">Cell membrane</keyword>
<keyword id="KW-0407">Ion channel</keyword>
<keyword id="KW-0406">Ion transport</keyword>
<keyword id="KW-0472">Membrane</keyword>
<keyword id="KW-0597">Phosphoprotein</keyword>
<keyword id="KW-0630">Potassium</keyword>
<keyword id="KW-0633">Potassium transport</keyword>
<keyword id="KW-1185">Reference proteome</keyword>
<keyword id="KW-0812">Transmembrane</keyword>
<keyword id="KW-1133">Transmembrane helix</keyword>
<keyword id="KW-0813">Transport</keyword>
<keyword id="KW-0851">Voltage-gated channel</keyword>
<proteinExistence type="evidence at transcript level"/>
<accession>Q9QZ65</accession>
<accession>Q9QZ64</accession>
<name>KCJ13_CAVPO</name>
<evidence type="ECO:0000250" key="1"/>
<evidence type="ECO:0000250" key="2">
    <source>
        <dbReference type="UniProtKB" id="O60928"/>
    </source>
</evidence>
<evidence type="ECO:0000250" key="3">
    <source>
        <dbReference type="UniProtKB" id="P49655"/>
    </source>
</evidence>
<evidence type="ECO:0000250" key="4">
    <source>
        <dbReference type="UniProtKB" id="P86046"/>
    </source>
</evidence>
<evidence type="ECO:0000255" key="5"/>
<evidence type="ECO:0000305" key="6"/>
<protein>
    <recommendedName>
        <fullName>Inward rectifier potassium channel 13</fullName>
    </recommendedName>
    <alternativeName>
        <fullName>Inward rectifier K(+) channel Kir7.1</fullName>
    </alternativeName>
    <alternativeName>
        <fullName>Potassium channel, inwardly rectifying subfamily J member 13</fullName>
    </alternativeName>
</protein>